<sequence length="38" mass="4451">MKVRPSVKPICEYCKVIRRNGRVMVICPTNPKHKQRQG</sequence>
<keyword id="KW-0687">Ribonucleoprotein</keyword>
<keyword id="KW-0689">Ribosomal protein</keyword>
<feature type="chain" id="PRO_1000204561" description="Large ribosomal subunit protein bL36">
    <location>
        <begin position="1"/>
        <end position="38"/>
    </location>
</feature>
<name>RL36_STRS7</name>
<gene>
    <name evidence="1" type="primary">rpmJ</name>
    <name type="ordered locus">SZO_00730</name>
</gene>
<dbReference type="EMBL" id="FM204884">
    <property type="protein sequence ID" value="CAW97685.1"/>
    <property type="molecule type" value="Genomic_DNA"/>
</dbReference>
<dbReference type="SMR" id="C0ME28"/>
<dbReference type="KEGG" id="seq:SZO_00730"/>
<dbReference type="eggNOG" id="COG0257">
    <property type="taxonomic scope" value="Bacteria"/>
</dbReference>
<dbReference type="HOGENOM" id="CLU_135723_6_2_9"/>
<dbReference type="Proteomes" id="UP000001368">
    <property type="component" value="Chromosome"/>
</dbReference>
<dbReference type="GO" id="GO:0005737">
    <property type="term" value="C:cytoplasm"/>
    <property type="evidence" value="ECO:0007669"/>
    <property type="project" value="UniProtKB-ARBA"/>
</dbReference>
<dbReference type="GO" id="GO:1990904">
    <property type="term" value="C:ribonucleoprotein complex"/>
    <property type="evidence" value="ECO:0007669"/>
    <property type="project" value="UniProtKB-KW"/>
</dbReference>
<dbReference type="GO" id="GO:0005840">
    <property type="term" value="C:ribosome"/>
    <property type="evidence" value="ECO:0007669"/>
    <property type="project" value="UniProtKB-KW"/>
</dbReference>
<dbReference type="GO" id="GO:0003735">
    <property type="term" value="F:structural constituent of ribosome"/>
    <property type="evidence" value="ECO:0007669"/>
    <property type="project" value="InterPro"/>
</dbReference>
<dbReference type="GO" id="GO:0006412">
    <property type="term" value="P:translation"/>
    <property type="evidence" value="ECO:0007669"/>
    <property type="project" value="UniProtKB-UniRule"/>
</dbReference>
<dbReference type="HAMAP" id="MF_00251">
    <property type="entry name" value="Ribosomal_bL36"/>
    <property type="match status" value="1"/>
</dbReference>
<dbReference type="InterPro" id="IPR000473">
    <property type="entry name" value="Ribosomal_bL36"/>
</dbReference>
<dbReference type="InterPro" id="IPR035977">
    <property type="entry name" value="Ribosomal_bL36_sp"/>
</dbReference>
<dbReference type="NCBIfam" id="TIGR01022">
    <property type="entry name" value="rpmJ_bact"/>
    <property type="match status" value="1"/>
</dbReference>
<dbReference type="PANTHER" id="PTHR42888">
    <property type="entry name" value="50S RIBOSOMAL PROTEIN L36, CHLOROPLASTIC"/>
    <property type="match status" value="1"/>
</dbReference>
<dbReference type="PANTHER" id="PTHR42888:SF1">
    <property type="entry name" value="LARGE RIBOSOMAL SUBUNIT PROTEIN BL36C"/>
    <property type="match status" value="1"/>
</dbReference>
<dbReference type="Pfam" id="PF00444">
    <property type="entry name" value="Ribosomal_L36"/>
    <property type="match status" value="1"/>
</dbReference>
<dbReference type="SUPFAM" id="SSF57840">
    <property type="entry name" value="Ribosomal protein L36"/>
    <property type="match status" value="1"/>
</dbReference>
<dbReference type="PROSITE" id="PS00828">
    <property type="entry name" value="RIBOSOMAL_L36"/>
    <property type="match status" value="1"/>
</dbReference>
<accession>C0ME28</accession>
<proteinExistence type="inferred from homology"/>
<protein>
    <recommendedName>
        <fullName evidence="1">Large ribosomal subunit protein bL36</fullName>
    </recommendedName>
    <alternativeName>
        <fullName evidence="2">50S ribosomal protein L36</fullName>
    </alternativeName>
</protein>
<comment type="similarity">
    <text evidence="1">Belongs to the bacterial ribosomal protein bL36 family.</text>
</comment>
<reference key="1">
    <citation type="journal article" date="2009" name="PLoS Pathog.">
        <title>Genomic evidence for the evolution of Streptococcus equi: host restriction, increased virulence, and genetic exchange with human pathogens.</title>
        <authorList>
            <person name="Holden M.T.G."/>
            <person name="Heather Z."/>
            <person name="Paillot R."/>
            <person name="Steward K.F."/>
            <person name="Webb K."/>
            <person name="Ainslie F."/>
            <person name="Jourdan T."/>
            <person name="Bason N.C."/>
            <person name="Holroyd N.E."/>
            <person name="Mungall K."/>
            <person name="Quail M.A."/>
            <person name="Sanders M."/>
            <person name="Simmonds M."/>
            <person name="Willey D."/>
            <person name="Brooks K."/>
            <person name="Aanensen D.M."/>
            <person name="Spratt B.G."/>
            <person name="Jolley K.A."/>
            <person name="Maiden M.C.J."/>
            <person name="Kehoe M."/>
            <person name="Chanter N."/>
            <person name="Bentley S.D."/>
            <person name="Robinson C."/>
            <person name="Maskell D.J."/>
            <person name="Parkhill J."/>
            <person name="Waller A.S."/>
        </authorList>
    </citation>
    <scope>NUCLEOTIDE SEQUENCE [LARGE SCALE GENOMIC DNA]</scope>
    <source>
        <strain>H70</strain>
    </source>
</reference>
<organism>
    <name type="scientific">Streptococcus equi subsp. zooepidemicus (strain H70)</name>
    <dbReference type="NCBI Taxonomy" id="553483"/>
    <lineage>
        <taxon>Bacteria</taxon>
        <taxon>Bacillati</taxon>
        <taxon>Bacillota</taxon>
        <taxon>Bacilli</taxon>
        <taxon>Lactobacillales</taxon>
        <taxon>Streptococcaceae</taxon>
        <taxon>Streptococcus</taxon>
    </lineage>
</organism>
<evidence type="ECO:0000255" key="1">
    <source>
        <dbReference type="HAMAP-Rule" id="MF_00251"/>
    </source>
</evidence>
<evidence type="ECO:0000305" key="2"/>